<feature type="chain" id="PRO_0000367149" description="Spastin">
    <location>
        <begin position="1"/>
        <end position="758"/>
    </location>
</feature>
<feature type="topological domain" description="Cytoplasmic" evidence="3">
    <location>
        <begin position="1"/>
        <end position="121"/>
    </location>
</feature>
<feature type="intramembrane region" description="Helical" evidence="3">
    <location>
        <begin position="122"/>
        <end position="142"/>
    </location>
</feature>
<feature type="topological domain" description="Cytoplasmic" evidence="3">
    <location>
        <begin position="143"/>
        <end position="758"/>
    </location>
</feature>
<feature type="domain" description="MIT" evidence="2">
    <location>
        <begin position="233"/>
        <end position="308"/>
    </location>
</feature>
<feature type="region of interest" description="Required for localization to punctate cytoplasmic foci" evidence="1">
    <location>
        <begin position="1"/>
        <end position="210"/>
    </location>
</feature>
<feature type="region of interest" description="Disordered" evidence="4">
    <location>
        <begin position="1"/>
        <end position="103"/>
    </location>
</feature>
<feature type="region of interest" description="Disordered" evidence="4">
    <location>
        <begin position="169"/>
        <end position="202"/>
    </location>
</feature>
<feature type="region of interest" description="Sufficient for interaction with microtubules and microtubule severing" evidence="1">
    <location>
        <begin position="208"/>
        <end position="758"/>
    </location>
</feature>
<feature type="region of interest" description="Disordered" evidence="4">
    <location>
        <begin position="323"/>
        <end position="454"/>
    </location>
</feature>
<feature type="region of interest" description="Required for interaction with microtubules" evidence="1">
    <location>
        <begin position="443"/>
        <end position="455"/>
    </location>
</feature>
<feature type="compositionally biased region" description="Low complexity" evidence="4">
    <location>
        <begin position="8"/>
        <end position="28"/>
    </location>
</feature>
<feature type="compositionally biased region" description="Low complexity" evidence="4">
    <location>
        <begin position="43"/>
        <end position="58"/>
    </location>
</feature>
<feature type="compositionally biased region" description="Low complexity" evidence="4">
    <location>
        <begin position="66"/>
        <end position="76"/>
    </location>
</feature>
<feature type="compositionally biased region" description="Low complexity" evidence="4">
    <location>
        <begin position="85"/>
        <end position="95"/>
    </location>
</feature>
<feature type="compositionally biased region" description="Polar residues" evidence="4">
    <location>
        <begin position="169"/>
        <end position="180"/>
    </location>
</feature>
<feature type="compositionally biased region" description="Polar residues" evidence="4">
    <location>
        <begin position="189"/>
        <end position="198"/>
    </location>
</feature>
<feature type="compositionally biased region" description="Basic and acidic residues" evidence="4">
    <location>
        <begin position="323"/>
        <end position="339"/>
    </location>
</feature>
<feature type="compositionally biased region" description="Polar residues" evidence="4">
    <location>
        <begin position="390"/>
        <end position="406"/>
    </location>
</feature>
<feature type="compositionally biased region" description="Polar residues" evidence="4">
    <location>
        <begin position="425"/>
        <end position="454"/>
    </location>
</feature>
<feature type="binding site" evidence="3">
    <location>
        <begin position="523"/>
        <end position="530"/>
    </location>
    <ligand>
        <name>ATP</name>
        <dbReference type="ChEBI" id="CHEBI:30616"/>
    </ligand>
</feature>
<evidence type="ECO:0000250" key="1">
    <source>
        <dbReference type="UniProtKB" id="Q8I0P1"/>
    </source>
</evidence>
<evidence type="ECO:0000255" key="2"/>
<evidence type="ECO:0000255" key="3">
    <source>
        <dbReference type="HAMAP-Rule" id="MF_03021"/>
    </source>
</evidence>
<evidence type="ECO:0000256" key="4">
    <source>
        <dbReference type="SAM" id="MobiDB-lite"/>
    </source>
</evidence>
<gene>
    <name evidence="3" type="primary">spas</name>
    <name type="ORF">GD21056</name>
</gene>
<accession>B4QSF0</accession>
<keyword id="KW-0067">ATP-binding</keyword>
<keyword id="KW-0131">Cell cycle</keyword>
<keyword id="KW-0132">Cell division</keyword>
<keyword id="KW-0158">Chromosome</keyword>
<keyword id="KW-0963">Cytoplasm</keyword>
<keyword id="KW-0206">Cytoskeleton</keyword>
<keyword id="KW-0217">Developmental protein</keyword>
<keyword id="KW-0221">Differentiation</keyword>
<keyword id="KW-0413">Isomerase</keyword>
<keyword id="KW-0551">Lipid droplet</keyword>
<keyword id="KW-0472">Membrane</keyword>
<keyword id="KW-0493">Microtubule</keyword>
<keyword id="KW-0498">Mitosis</keyword>
<keyword id="KW-0524">Neurogenesis</keyword>
<keyword id="KW-0547">Nucleotide-binding</keyword>
<keyword id="KW-1185">Reference proteome</keyword>
<proteinExistence type="inferred from homology"/>
<comment type="function">
    <text evidence="3">ATP-dependent microtubule severing protein. Stimulates microtubule minus-end depolymerization and poleward microtubule flux in the mitotic spindle. Regulates microtubule stability in the neuromuscular junction synapse. Involved in lipid metabolism by regulating the size and distribution of lipid droplets. Involved in axon regeneration by regulating microtubule severing.</text>
</comment>
<comment type="catalytic activity">
    <reaction evidence="3">
        <text>n ATP + n H2O + a microtubule = n ADP + n phosphate + (n+1) alpha/beta tubulin heterodimers.</text>
        <dbReference type="EC" id="5.6.1.1"/>
    </reaction>
</comment>
<comment type="subunit">
    <text evidence="3">Homohexamer. The homohexamer is stabilized by ATP-binding. The homohexamer may adopt a ring conformation through which microtubules pass prior to being severed. Interacts with microtubules. Interacts with atl; may be involved in microtubule dynamics.</text>
</comment>
<comment type="subcellular location">
    <subcellularLocation>
        <location evidence="3">Membrane</location>
        <topology evidence="3">Peripheral membrane protein</topology>
    </subcellularLocation>
    <subcellularLocation>
        <location evidence="3">Cytoplasm</location>
        <location evidence="3">Cytoskeleton</location>
        <location evidence="3">Microtubule organizing center</location>
        <location evidence="3">Centrosome</location>
    </subcellularLocation>
    <subcellularLocation>
        <location evidence="3">Cytoplasm</location>
        <location evidence="3">Cytoskeleton</location>
    </subcellularLocation>
    <subcellularLocation>
        <location evidence="3">Chromosome</location>
    </subcellularLocation>
    <subcellularLocation>
        <location evidence="3">Lipid droplet</location>
    </subcellularLocation>
    <text evidence="3">Forms an intramembrane hairpin-like structure in the membrane. Colocalizes with cellular microtubule arrays. Localizes to chromosomes from prometaphase/metaphase to anaphase, and this requires microtubules. Localizes to discrete punctate cytoplasmic foci which may correspond to secretory vesicles.</text>
</comment>
<comment type="similarity">
    <text evidence="3">Belongs to the AAA ATPase family. Spastin subfamily.</text>
</comment>
<organism>
    <name type="scientific">Drosophila simulans</name>
    <name type="common">Fruit fly</name>
    <dbReference type="NCBI Taxonomy" id="7240"/>
    <lineage>
        <taxon>Eukaryota</taxon>
        <taxon>Metazoa</taxon>
        <taxon>Ecdysozoa</taxon>
        <taxon>Arthropoda</taxon>
        <taxon>Hexapoda</taxon>
        <taxon>Insecta</taxon>
        <taxon>Pterygota</taxon>
        <taxon>Neoptera</taxon>
        <taxon>Endopterygota</taxon>
        <taxon>Diptera</taxon>
        <taxon>Brachycera</taxon>
        <taxon>Muscomorpha</taxon>
        <taxon>Ephydroidea</taxon>
        <taxon>Drosophilidae</taxon>
        <taxon>Drosophila</taxon>
        <taxon>Sophophora</taxon>
    </lineage>
</organism>
<protein>
    <recommendedName>
        <fullName evidence="3">Spastin</fullName>
        <ecNumber evidence="3">5.6.1.1</ecNumber>
    </recommendedName>
</protein>
<sequence>MVRTKNQSSSSSASSSSTKSPIKSSSGAGSSGGGVGGRQSTHRSSSASNVAAVVAGGSSAAGGGSSSNRRSPGSSPDGDDDTTTTDDLTPTTCSPRSGHHHSYGGYSSSVHKQNLYVVSFPIIFLFNVLRSLIYQLFCIFRYLYGASTKVIYRPHRRDCNIEIVVQNSSKEQQQSLNHPSELNREGDGQEQQLSNQPQRFRPIQPLEMAANRPGGGYSPGPGDPLLAKQKHHHRRAFEYISKALKIDEENEGHKELAIELYRKGIKELEDGIAVDCWSGRGDVWDRAQRLHDKMQTNLSMARDRLHFLALREQDLQMQRLSLKEKQKEEARSKPQKSREPMLAGMTNEPMKLRVRSSGYGPKATTSAQPTASGRKLTIGSKRPVNLAVANKSQTLPRNLGSKTSVGAVQRQPAKTAATPPAVRRQFSSGRNTPPQRSRTPINNNGPSGSGASTPVVSVKGVEQKLVQLILDEIVEGGAKVEWTDIAGQDVAKQALQEMVILPSVRPELFTGLRAPAKGLLLFGPPGNGKTLLARAVATECSATFLNISAASLTSKYVGDGEKLVRALFAVARHMQPSIIFIDEVDSLLSERSSSEHEASRRLKTEFLVEFDGLPGNPDGDRIVVLAATNRPQELDEAALRRFTKRVYVSLPDEQTRELLLNRLLQKQGSPLDTEALRRLAKITDGYSGSDLTARPKDAALEPIRELNVEQVKCLDISAMRAITEQDFHSSLKRIRRSVAPQSLNSYEKWSQDYGDITI</sequence>
<dbReference type="EC" id="5.6.1.1" evidence="3"/>
<dbReference type="EMBL" id="CM000364">
    <property type="protein sequence ID" value="EDX14149.1"/>
    <property type="molecule type" value="Genomic_DNA"/>
</dbReference>
<dbReference type="SMR" id="B4QSF0"/>
<dbReference type="STRING" id="7240.B4QSF0"/>
<dbReference type="HOGENOM" id="CLU_000688_21_5_1"/>
<dbReference type="OMA" id="KSREPML"/>
<dbReference type="OrthoDB" id="10251136at2759"/>
<dbReference type="PhylomeDB" id="B4QSF0"/>
<dbReference type="Proteomes" id="UP000000304">
    <property type="component" value="Chromosome 3R"/>
</dbReference>
<dbReference type="GO" id="GO:0005813">
    <property type="term" value="C:centrosome"/>
    <property type="evidence" value="ECO:0007669"/>
    <property type="project" value="UniProtKB-SubCell"/>
</dbReference>
<dbReference type="GO" id="GO:0005694">
    <property type="term" value="C:chromosome"/>
    <property type="evidence" value="ECO:0007669"/>
    <property type="project" value="UniProtKB-SubCell"/>
</dbReference>
<dbReference type="GO" id="GO:0005811">
    <property type="term" value="C:lipid droplet"/>
    <property type="evidence" value="ECO:0007669"/>
    <property type="project" value="UniProtKB-SubCell"/>
</dbReference>
<dbReference type="GO" id="GO:0016020">
    <property type="term" value="C:membrane"/>
    <property type="evidence" value="ECO:0007669"/>
    <property type="project" value="UniProtKB-SubCell"/>
</dbReference>
<dbReference type="GO" id="GO:0005874">
    <property type="term" value="C:microtubule"/>
    <property type="evidence" value="ECO:0007669"/>
    <property type="project" value="UniProtKB-UniRule"/>
</dbReference>
<dbReference type="GO" id="GO:0031594">
    <property type="term" value="C:neuromuscular junction"/>
    <property type="evidence" value="ECO:0007669"/>
    <property type="project" value="EnsemblMetazoa"/>
</dbReference>
<dbReference type="GO" id="GO:0005819">
    <property type="term" value="C:spindle"/>
    <property type="evidence" value="ECO:0007669"/>
    <property type="project" value="UniProtKB-UniRule"/>
</dbReference>
<dbReference type="GO" id="GO:0008021">
    <property type="term" value="C:synaptic vesicle"/>
    <property type="evidence" value="ECO:0007669"/>
    <property type="project" value="EnsemblMetazoa"/>
</dbReference>
<dbReference type="GO" id="GO:0043195">
    <property type="term" value="C:terminal bouton"/>
    <property type="evidence" value="ECO:0007669"/>
    <property type="project" value="EnsemblMetazoa"/>
</dbReference>
<dbReference type="GO" id="GO:0005524">
    <property type="term" value="F:ATP binding"/>
    <property type="evidence" value="ECO:0007669"/>
    <property type="project" value="UniProtKB-UniRule"/>
</dbReference>
<dbReference type="GO" id="GO:0016887">
    <property type="term" value="F:ATP hydrolysis activity"/>
    <property type="evidence" value="ECO:0007669"/>
    <property type="project" value="InterPro"/>
</dbReference>
<dbReference type="GO" id="GO:0008017">
    <property type="term" value="F:microtubule binding"/>
    <property type="evidence" value="ECO:0000250"/>
    <property type="project" value="UniProtKB"/>
</dbReference>
<dbReference type="GO" id="GO:0008568">
    <property type="term" value="F:microtubule severing ATPase activity"/>
    <property type="evidence" value="ECO:0000250"/>
    <property type="project" value="UniProtKB"/>
</dbReference>
<dbReference type="GO" id="GO:0008344">
    <property type="term" value="P:adult locomotory behavior"/>
    <property type="evidence" value="ECO:0007669"/>
    <property type="project" value="UniProtKB-UniRule"/>
</dbReference>
<dbReference type="GO" id="GO:0051301">
    <property type="term" value="P:cell division"/>
    <property type="evidence" value="ECO:0007669"/>
    <property type="project" value="UniProtKB-KW"/>
</dbReference>
<dbReference type="GO" id="GO:0035099">
    <property type="term" value="P:hemocyte migration"/>
    <property type="evidence" value="ECO:0007669"/>
    <property type="project" value="EnsemblMetazoa"/>
</dbReference>
<dbReference type="GO" id="GO:0051013">
    <property type="term" value="P:microtubule severing"/>
    <property type="evidence" value="ECO:0000250"/>
    <property type="project" value="UniProtKB"/>
</dbReference>
<dbReference type="GO" id="GO:0007079">
    <property type="term" value="P:mitotic chromosome movement towards spindle pole"/>
    <property type="evidence" value="ECO:0007669"/>
    <property type="project" value="UniProtKB-UniRule"/>
</dbReference>
<dbReference type="GO" id="GO:0000022">
    <property type="term" value="P:mitotic spindle elongation"/>
    <property type="evidence" value="ECO:0007669"/>
    <property type="project" value="UniProtKB-UniRule"/>
</dbReference>
<dbReference type="GO" id="GO:0007026">
    <property type="term" value="P:negative regulation of microtubule depolymerization"/>
    <property type="evidence" value="ECO:0007669"/>
    <property type="project" value="EnsemblMetazoa"/>
</dbReference>
<dbReference type="GO" id="GO:1900074">
    <property type="term" value="P:negative regulation of neuromuscular synaptic transmission"/>
    <property type="evidence" value="ECO:0007669"/>
    <property type="project" value="EnsemblMetazoa"/>
</dbReference>
<dbReference type="GO" id="GO:0045886">
    <property type="term" value="P:negative regulation of synaptic assembly at neuromuscular junction"/>
    <property type="evidence" value="ECO:0007669"/>
    <property type="project" value="EnsemblMetazoa"/>
</dbReference>
<dbReference type="GO" id="GO:0007399">
    <property type="term" value="P:nervous system development"/>
    <property type="evidence" value="ECO:0007669"/>
    <property type="project" value="UniProtKB-KW"/>
</dbReference>
<dbReference type="GO" id="GO:0048691">
    <property type="term" value="P:positive regulation of axon extension involved in regeneration"/>
    <property type="evidence" value="ECO:0007669"/>
    <property type="project" value="EnsemblMetazoa"/>
</dbReference>
<dbReference type="GO" id="GO:0050775">
    <property type="term" value="P:positive regulation of dendrite morphogenesis"/>
    <property type="evidence" value="ECO:0007669"/>
    <property type="project" value="EnsemblMetazoa"/>
</dbReference>
<dbReference type="GO" id="GO:0045834">
    <property type="term" value="P:positive regulation of lipid metabolic process"/>
    <property type="evidence" value="ECO:0007669"/>
    <property type="project" value="EnsemblMetazoa"/>
</dbReference>
<dbReference type="GO" id="GO:0031117">
    <property type="term" value="P:positive regulation of microtubule depolymerization"/>
    <property type="evidence" value="ECO:0007669"/>
    <property type="project" value="UniProtKB-UniRule"/>
</dbReference>
<dbReference type="GO" id="GO:1900075">
    <property type="term" value="P:positive regulation of neuromuscular synaptic transmission"/>
    <property type="evidence" value="ECO:0007669"/>
    <property type="project" value="EnsemblMetazoa"/>
</dbReference>
<dbReference type="GO" id="GO:0045887">
    <property type="term" value="P:positive regulation of synaptic assembly at neuromuscular junction"/>
    <property type="evidence" value="ECO:0007669"/>
    <property type="project" value="EnsemblMetazoa"/>
</dbReference>
<dbReference type="GO" id="GO:0034214">
    <property type="term" value="P:protein hexamerization"/>
    <property type="evidence" value="ECO:0007669"/>
    <property type="project" value="UniProtKB-UniRule"/>
</dbReference>
<dbReference type="GO" id="GO:2000331">
    <property type="term" value="P:regulation of terminal button organization"/>
    <property type="evidence" value="ECO:0007669"/>
    <property type="project" value="EnsemblMetazoa"/>
</dbReference>
<dbReference type="CDD" id="cd02679">
    <property type="entry name" value="MIT_spastin"/>
    <property type="match status" value="1"/>
</dbReference>
<dbReference type="CDD" id="cd19524">
    <property type="entry name" value="RecA-like_spastin"/>
    <property type="match status" value="1"/>
</dbReference>
<dbReference type="FunFam" id="3.40.50.300:FF:000093">
    <property type="entry name" value="Fidgetin-like 1"/>
    <property type="match status" value="1"/>
</dbReference>
<dbReference type="FunFam" id="1.10.8.60:FF:000036">
    <property type="entry name" value="Spastin"/>
    <property type="match status" value="1"/>
</dbReference>
<dbReference type="FunFam" id="1.20.58.80:FF:000006">
    <property type="entry name" value="Spastin"/>
    <property type="match status" value="1"/>
</dbReference>
<dbReference type="Gene3D" id="1.10.8.60">
    <property type="match status" value="1"/>
</dbReference>
<dbReference type="Gene3D" id="3.40.50.300">
    <property type="entry name" value="P-loop containing nucleotide triphosphate hydrolases"/>
    <property type="match status" value="1"/>
</dbReference>
<dbReference type="Gene3D" id="1.20.58.80">
    <property type="entry name" value="Phosphotransferase system, lactose/cellobiose-type IIA subunit"/>
    <property type="match status" value="1"/>
</dbReference>
<dbReference type="HAMAP" id="MF_03021">
    <property type="entry name" value="Spastin"/>
    <property type="match status" value="1"/>
</dbReference>
<dbReference type="InterPro" id="IPR003593">
    <property type="entry name" value="AAA+_ATPase"/>
</dbReference>
<dbReference type="InterPro" id="IPR003959">
    <property type="entry name" value="ATPase_AAA_core"/>
</dbReference>
<dbReference type="InterPro" id="IPR003960">
    <property type="entry name" value="ATPase_AAA_CS"/>
</dbReference>
<dbReference type="InterPro" id="IPR007330">
    <property type="entry name" value="MIT_dom"/>
</dbReference>
<dbReference type="InterPro" id="IPR050304">
    <property type="entry name" value="MT-severing_AAA_ATPase"/>
</dbReference>
<dbReference type="InterPro" id="IPR027417">
    <property type="entry name" value="P-loop_NTPase"/>
</dbReference>
<dbReference type="InterPro" id="IPR015415">
    <property type="entry name" value="Spast_Vps4_C"/>
</dbReference>
<dbReference type="InterPro" id="IPR017179">
    <property type="entry name" value="Spastin"/>
</dbReference>
<dbReference type="PANTHER" id="PTHR23074">
    <property type="entry name" value="AAA DOMAIN-CONTAINING"/>
    <property type="match status" value="1"/>
</dbReference>
<dbReference type="PANTHER" id="PTHR23074:SF86">
    <property type="entry name" value="SPASTIN"/>
    <property type="match status" value="1"/>
</dbReference>
<dbReference type="Pfam" id="PF00004">
    <property type="entry name" value="AAA"/>
    <property type="match status" value="1"/>
</dbReference>
<dbReference type="Pfam" id="PF09336">
    <property type="entry name" value="Vps4_C"/>
    <property type="match status" value="1"/>
</dbReference>
<dbReference type="SMART" id="SM00382">
    <property type="entry name" value="AAA"/>
    <property type="match status" value="1"/>
</dbReference>
<dbReference type="SMART" id="SM00745">
    <property type="entry name" value="MIT"/>
    <property type="match status" value="1"/>
</dbReference>
<dbReference type="SUPFAM" id="SSF52540">
    <property type="entry name" value="P-loop containing nucleoside triphosphate hydrolases"/>
    <property type="match status" value="1"/>
</dbReference>
<dbReference type="PROSITE" id="PS00674">
    <property type="entry name" value="AAA"/>
    <property type="match status" value="1"/>
</dbReference>
<reference key="1">
    <citation type="journal article" date="2007" name="Nature">
        <title>Evolution of genes and genomes on the Drosophila phylogeny.</title>
        <authorList>
            <consortium name="Drosophila 12 genomes consortium"/>
        </authorList>
    </citation>
    <scope>NUCLEOTIDE SEQUENCE [LARGE SCALE GENOMIC DNA]</scope>
</reference>
<name>SPAST_DROSI</name>